<comment type="function">
    <text evidence="1">Catalyzes amidations at positions B, D, E, and G on adenosylcobyrinic A,C-diamide. NH(2) groups are provided by glutamine, and one molecule of ATP is hydrogenolyzed for each amidation.</text>
</comment>
<comment type="pathway">
    <text evidence="1">Cofactor biosynthesis; adenosylcobalamin biosynthesis.</text>
</comment>
<comment type="similarity">
    <text evidence="1">Belongs to the CobB/CobQ family. CobQ subfamily.</text>
</comment>
<sequence length="502" mass="53458">MSGGLLIAGTTSDAGKSVVTAGICRWLVRQGVKVAPFKAQNMSLNSFVTREGAEIGRAQAMQAQAARVEPTALMNPVLLKPGSDRSSQVVLMGRPVGEMSARGYHGGRQEALLGTVLDCLAELRGTYDAVICEGAGSPAEINLRRTDIVNMGIARNARLPVLVVGDIDRGGVFASFFGTVALLSREDQELVAGFLVNKFRGDVSLLEPGLDMLRNLTGRPSYGVLPFQHGLGIDEEDGLRVSLRGSVRESAVSSPVGEDILRVAVCAIPLMSNFTDVDALAAEPGVVVRFVDRPEELADADLVVIPGTRGTVKALEWLRERGLAEALRRRAAAGRPVLGICGGFQVLGEHIEDDVESRRGHVEGLGLLPVRVRFAREKTLTRPVGEALGEHVEGYEIHHGVADVTGGDPFLDGCRVGAVWGTHWHGSLESDGFRRAFLREVAAAAGRRFVPAAGTSFAGLREEQLDRLGDLIEEHADTDALWRLIESGAPSGLPFIPPGAPA</sequence>
<protein>
    <recommendedName>
        <fullName evidence="1">Cobyric acid synthase</fullName>
    </recommendedName>
</protein>
<accession>Q829J5</accession>
<evidence type="ECO:0000255" key="1">
    <source>
        <dbReference type="HAMAP-Rule" id="MF_00028"/>
    </source>
</evidence>
<organism>
    <name type="scientific">Streptomyces avermitilis (strain ATCC 31267 / DSM 46492 / JCM 5070 / NBRC 14893 / NCIMB 12804 / NRRL 8165 / MA-4680)</name>
    <dbReference type="NCBI Taxonomy" id="227882"/>
    <lineage>
        <taxon>Bacteria</taxon>
        <taxon>Bacillati</taxon>
        <taxon>Actinomycetota</taxon>
        <taxon>Actinomycetes</taxon>
        <taxon>Kitasatosporales</taxon>
        <taxon>Streptomycetaceae</taxon>
        <taxon>Streptomyces</taxon>
    </lineage>
</organism>
<proteinExistence type="inferred from homology"/>
<dbReference type="EMBL" id="BA000030">
    <property type="protein sequence ID" value="BAC74127.1"/>
    <property type="molecule type" value="Genomic_DNA"/>
</dbReference>
<dbReference type="RefSeq" id="WP_010987816.1">
    <property type="nucleotide sequence ID" value="NZ_JZJK01000089.1"/>
</dbReference>
<dbReference type="GeneID" id="41543490"/>
<dbReference type="KEGG" id="sma:SAVERM_6416"/>
<dbReference type="eggNOG" id="COG1492">
    <property type="taxonomic scope" value="Bacteria"/>
</dbReference>
<dbReference type="HOGENOM" id="CLU_019250_2_2_11"/>
<dbReference type="OrthoDB" id="9808302at2"/>
<dbReference type="UniPathway" id="UPA00148"/>
<dbReference type="Proteomes" id="UP000000428">
    <property type="component" value="Chromosome"/>
</dbReference>
<dbReference type="GO" id="GO:0015420">
    <property type="term" value="F:ABC-type vitamin B12 transporter activity"/>
    <property type="evidence" value="ECO:0007669"/>
    <property type="project" value="UniProtKB-UniRule"/>
</dbReference>
<dbReference type="GO" id="GO:0003824">
    <property type="term" value="F:catalytic activity"/>
    <property type="evidence" value="ECO:0007669"/>
    <property type="project" value="InterPro"/>
</dbReference>
<dbReference type="GO" id="GO:0009236">
    <property type="term" value="P:cobalamin biosynthetic process"/>
    <property type="evidence" value="ECO:0007669"/>
    <property type="project" value="UniProtKB-UniRule"/>
</dbReference>
<dbReference type="CDD" id="cd05389">
    <property type="entry name" value="CobQ_N"/>
    <property type="match status" value="1"/>
</dbReference>
<dbReference type="CDD" id="cd01750">
    <property type="entry name" value="GATase1_CobQ"/>
    <property type="match status" value="1"/>
</dbReference>
<dbReference type="Gene3D" id="3.40.50.880">
    <property type="match status" value="1"/>
</dbReference>
<dbReference type="Gene3D" id="3.40.50.300">
    <property type="entry name" value="P-loop containing nucleotide triphosphate hydrolases"/>
    <property type="match status" value="1"/>
</dbReference>
<dbReference type="HAMAP" id="MF_00028">
    <property type="entry name" value="CobQ"/>
    <property type="match status" value="1"/>
</dbReference>
<dbReference type="InterPro" id="IPR029062">
    <property type="entry name" value="Class_I_gatase-like"/>
</dbReference>
<dbReference type="InterPro" id="IPR002586">
    <property type="entry name" value="CobQ/CobB/MinD/ParA_Nub-bd_dom"/>
</dbReference>
<dbReference type="InterPro" id="IPR033949">
    <property type="entry name" value="CobQ_GATase1"/>
</dbReference>
<dbReference type="InterPro" id="IPR047045">
    <property type="entry name" value="CobQ_N"/>
</dbReference>
<dbReference type="InterPro" id="IPR004459">
    <property type="entry name" value="CobQ_synth"/>
</dbReference>
<dbReference type="InterPro" id="IPR011698">
    <property type="entry name" value="GATase_3"/>
</dbReference>
<dbReference type="InterPro" id="IPR027417">
    <property type="entry name" value="P-loop_NTPase"/>
</dbReference>
<dbReference type="NCBIfam" id="TIGR00313">
    <property type="entry name" value="cobQ"/>
    <property type="match status" value="1"/>
</dbReference>
<dbReference type="NCBIfam" id="NF001989">
    <property type="entry name" value="PRK00784.1"/>
    <property type="match status" value="1"/>
</dbReference>
<dbReference type="PANTHER" id="PTHR21343:SF1">
    <property type="entry name" value="COBYRIC ACID SYNTHASE"/>
    <property type="match status" value="1"/>
</dbReference>
<dbReference type="PANTHER" id="PTHR21343">
    <property type="entry name" value="DETHIOBIOTIN SYNTHETASE"/>
    <property type="match status" value="1"/>
</dbReference>
<dbReference type="Pfam" id="PF01656">
    <property type="entry name" value="CbiA"/>
    <property type="match status" value="1"/>
</dbReference>
<dbReference type="Pfam" id="PF07685">
    <property type="entry name" value="GATase_3"/>
    <property type="match status" value="1"/>
</dbReference>
<dbReference type="SUPFAM" id="SSF52317">
    <property type="entry name" value="Class I glutamine amidotransferase-like"/>
    <property type="match status" value="1"/>
</dbReference>
<dbReference type="SUPFAM" id="SSF52540">
    <property type="entry name" value="P-loop containing nucleoside triphosphate hydrolases"/>
    <property type="match status" value="1"/>
</dbReference>
<dbReference type="PROSITE" id="PS51274">
    <property type="entry name" value="GATASE_COBBQ"/>
    <property type="match status" value="1"/>
</dbReference>
<name>COBQ_STRAW</name>
<keyword id="KW-0169">Cobalamin biosynthesis</keyword>
<keyword id="KW-0315">Glutamine amidotransferase</keyword>
<keyword id="KW-1185">Reference proteome</keyword>
<feature type="chain" id="PRO_0000141331" description="Cobyric acid synthase">
    <location>
        <begin position="1"/>
        <end position="502"/>
    </location>
</feature>
<feature type="domain" description="GATase cobBQ-type" evidence="1">
    <location>
        <begin position="260"/>
        <end position="433"/>
    </location>
</feature>
<feature type="active site" description="Nucleophile" evidence="1">
    <location>
        <position position="341"/>
    </location>
</feature>
<feature type="active site" evidence="1">
    <location>
        <position position="425"/>
    </location>
</feature>
<gene>
    <name evidence="1" type="primary">cobQ</name>
    <name type="ordered locus">SAV_6416</name>
</gene>
<reference key="1">
    <citation type="journal article" date="2001" name="Proc. Natl. Acad. Sci. U.S.A.">
        <title>Genome sequence of an industrial microorganism Streptomyces avermitilis: deducing the ability of producing secondary metabolites.</title>
        <authorList>
            <person name="Omura S."/>
            <person name="Ikeda H."/>
            <person name="Ishikawa J."/>
            <person name="Hanamoto A."/>
            <person name="Takahashi C."/>
            <person name="Shinose M."/>
            <person name="Takahashi Y."/>
            <person name="Horikawa H."/>
            <person name="Nakazawa H."/>
            <person name="Osonoe T."/>
            <person name="Kikuchi H."/>
            <person name="Shiba T."/>
            <person name="Sakaki Y."/>
            <person name="Hattori M."/>
        </authorList>
    </citation>
    <scope>NUCLEOTIDE SEQUENCE [LARGE SCALE GENOMIC DNA]</scope>
    <source>
        <strain>ATCC 31267 / DSM 46492 / JCM 5070 / NBRC 14893 / NCIMB 12804 / NRRL 8165 / MA-4680</strain>
    </source>
</reference>
<reference key="2">
    <citation type="journal article" date="2003" name="Nat. Biotechnol.">
        <title>Complete genome sequence and comparative analysis of the industrial microorganism Streptomyces avermitilis.</title>
        <authorList>
            <person name="Ikeda H."/>
            <person name="Ishikawa J."/>
            <person name="Hanamoto A."/>
            <person name="Shinose M."/>
            <person name="Kikuchi H."/>
            <person name="Shiba T."/>
            <person name="Sakaki Y."/>
            <person name="Hattori M."/>
            <person name="Omura S."/>
        </authorList>
    </citation>
    <scope>NUCLEOTIDE SEQUENCE [LARGE SCALE GENOMIC DNA]</scope>
    <source>
        <strain>ATCC 31267 / DSM 46492 / JCM 5070 / NBRC 14893 / NCIMB 12804 / NRRL 8165 / MA-4680</strain>
    </source>
</reference>